<feature type="chain" id="PRO_1000011792" description="Mannitol-1-phosphate 5-dehydrogenase">
    <location>
        <begin position="1"/>
        <end position="382"/>
    </location>
</feature>
<feature type="binding site" evidence="1">
    <location>
        <begin position="3"/>
        <end position="14"/>
    </location>
    <ligand>
        <name>NAD(+)</name>
        <dbReference type="ChEBI" id="CHEBI:57540"/>
    </ligand>
</feature>
<protein>
    <recommendedName>
        <fullName evidence="1">Mannitol-1-phosphate 5-dehydrogenase</fullName>
        <ecNumber evidence="1">1.1.1.17</ecNumber>
    </recommendedName>
</protein>
<keyword id="KW-0520">NAD</keyword>
<keyword id="KW-0560">Oxidoreductase</keyword>
<dbReference type="EC" id="1.1.1.17" evidence="1"/>
<dbReference type="EMBL" id="CP000474">
    <property type="protein sequence ID" value="ABM09759.1"/>
    <property type="molecule type" value="Genomic_DNA"/>
</dbReference>
<dbReference type="RefSeq" id="WP_011776461.1">
    <property type="nucleotide sequence ID" value="NC_008711.1"/>
</dbReference>
<dbReference type="SMR" id="A1RBC4"/>
<dbReference type="STRING" id="290340.AAur_3858"/>
<dbReference type="KEGG" id="aau:AAur_3858"/>
<dbReference type="eggNOG" id="COG0246">
    <property type="taxonomic scope" value="Bacteria"/>
</dbReference>
<dbReference type="HOGENOM" id="CLU_036089_0_1_11"/>
<dbReference type="OrthoDB" id="271711at2"/>
<dbReference type="Proteomes" id="UP000000637">
    <property type="component" value="Chromosome"/>
</dbReference>
<dbReference type="GO" id="GO:0005829">
    <property type="term" value="C:cytosol"/>
    <property type="evidence" value="ECO:0007669"/>
    <property type="project" value="TreeGrafter"/>
</dbReference>
<dbReference type="GO" id="GO:0008926">
    <property type="term" value="F:mannitol-1-phosphate 5-dehydrogenase activity"/>
    <property type="evidence" value="ECO:0007669"/>
    <property type="project" value="UniProtKB-UniRule"/>
</dbReference>
<dbReference type="GO" id="GO:0019592">
    <property type="term" value="P:mannitol catabolic process"/>
    <property type="evidence" value="ECO:0007669"/>
    <property type="project" value="TreeGrafter"/>
</dbReference>
<dbReference type="Gene3D" id="1.10.1040.10">
    <property type="entry name" value="N-(1-d-carboxylethyl)-l-norvaline Dehydrogenase, domain 2"/>
    <property type="match status" value="1"/>
</dbReference>
<dbReference type="Gene3D" id="3.40.50.720">
    <property type="entry name" value="NAD(P)-binding Rossmann-like Domain"/>
    <property type="match status" value="1"/>
</dbReference>
<dbReference type="HAMAP" id="MF_00196">
    <property type="entry name" value="Mannitol_dehydrog"/>
    <property type="match status" value="1"/>
</dbReference>
<dbReference type="InterPro" id="IPR008927">
    <property type="entry name" value="6-PGluconate_DH-like_C_sf"/>
</dbReference>
<dbReference type="InterPro" id="IPR013328">
    <property type="entry name" value="6PGD_dom2"/>
</dbReference>
<dbReference type="InterPro" id="IPR023028">
    <property type="entry name" value="Mannitol_1_phos_5_DH"/>
</dbReference>
<dbReference type="InterPro" id="IPR000669">
    <property type="entry name" value="Mannitol_DH"/>
</dbReference>
<dbReference type="InterPro" id="IPR013118">
    <property type="entry name" value="Mannitol_DH_C"/>
</dbReference>
<dbReference type="InterPro" id="IPR013131">
    <property type="entry name" value="Mannitol_DH_N"/>
</dbReference>
<dbReference type="InterPro" id="IPR036291">
    <property type="entry name" value="NAD(P)-bd_dom_sf"/>
</dbReference>
<dbReference type="NCBIfam" id="NF002646">
    <property type="entry name" value="PRK02318.1-2"/>
    <property type="match status" value="1"/>
</dbReference>
<dbReference type="NCBIfam" id="NF002652">
    <property type="entry name" value="PRK02318.2-5"/>
    <property type="match status" value="1"/>
</dbReference>
<dbReference type="PANTHER" id="PTHR30524:SF0">
    <property type="entry name" value="ALTRONATE OXIDOREDUCTASE-RELATED"/>
    <property type="match status" value="1"/>
</dbReference>
<dbReference type="PANTHER" id="PTHR30524">
    <property type="entry name" value="MANNITOL-1-PHOSPHATE 5-DEHYDROGENASE"/>
    <property type="match status" value="1"/>
</dbReference>
<dbReference type="Pfam" id="PF01232">
    <property type="entry name" value="Mannitol_dh"/>
    <property type="match status" value="1"/>
</dbReference>
<dbReference type="Pfam" id="PF08125">
    <property type="entry name" value="Mannitol_dh_C"/>
    <property type="match status" value="1"/>
</dbReference>
<dbReference type="PRINTS" id="PR00084">
    <property type="entry name" value="MTLDHDRGNASE"/>
</dbReference>
<dbReference type="SUPFAM" id="SSF48179">
    <property type="entry name" value="6-phosphogluconate dehydrogenase C-terminal domain-like"/>
    <property type="match status" value="1"/>
</dbReference>
<dbReference type="SUPFAM" id="SSF51735">
    <property type="entry name" value="NAD(P)-binding Rossmann-fold domains"/>
    <property type="match status" value="1"/>
</dbReference>
<evidence type="ECO:0000255" key="1">
    <source>
        <dbReference type="HAMAP-Rule" id="MF_00196"/>
    </source>
</evidence>
<name>MTLD_PAEAT</name>
<accession>A1RBC4</accession>
<reference key="1">
    <citation type="journal article" date="2006" name="PLoS Genet.">
        <title>Secrets of soil survival revealed by the genome sequence of Arthrobacter aurescens TC1.</title>
        <authorList>
            <person name="Mongodin E.F."/>
            <person name="Shapir N."/>
            <person name="Daugherty S.C."/>
            <person name="DeBoy R.T."/>
            <person name="Emerson J.B."/>
            <person name="Shvartzbeyn A."/>
            <person name="Radune D."/>
            <person name="Vamathevan J."/>
            <person name="Riggs F."/>
            <person name="Grinberg V."/>
            <person name="Khouri H.M."/>
            <person name="Wackett L.P."/>
            <person name="Nelson K.E."/>
            <person name="Sadowsky M.J."/>
        </authorList>
    </citation>
    <scope>NUCLEOTIDE SEQUENCE [LARGE SCALE GENOMIC DNA]</scope>
    <source>
        <strain>TC1</strain>
    </source>
</reference>
<organism>
    <name type="scientific">Paenarthrobacter aurescens (strain TC1)</name>
    <dbReference type="NCBI Taxonomy" id="290340"/>
    <lineage>
        <taxon>Bacteria</taxon>
        <taxon>Bacillati</taxon>
        <taxon>Actinomycetota</taxon>
        <taxon>Actinomycetes</taxon>
        <taxon>Micrococcales</taxon>
        <taxon>Micrococcaceae</taxon>
        <taxon>Paenarthrobacter</taxon>
    </lineage>
</organism>
<gene>
    <name evidence="1" type="primary">mtlD</name>
    <name type="ordered locus">AAur_3858</name>
</gene>
<sequence>MKAVHFGAGNIGRGFVGLLLHEAGYEVVFADVADALISQLASASSYDVHEVGENPAVKTVSGFRAFNSASQEAAVVEEISTADVLTTAVGPHILKFVAPVIARGLAVRPADLPPLQVMACENAINATDLLHTEIRAAWDDSAGDLDAVAVFANTAVDRIVPNQAPGQGLDVTVETFYEWVIDRTPFGGNAPKIPGATFVDELGPYIERKLFTVNTGHASAAYFGYAAGLEKISDAMADPAVAAKVRAVLEETKELLVAKHGFEEAEQEAYVQKILSRFTNPHLPDTVNRVGRAPLRKLSRHERFVGPAAELAERGVTPAALLEAMSAALRFDDGNDDEAVELTNLLSELDAAAAVERITELTPTHPLFPALQKLVEDRQAEA</sequence>
<proteinExistence type="inferred from homology"/>
<comment type="catalytic activity">
    <reaction evidence="1">
        <text>D-mannitol 1-phosphate + NAD(+) = beta-D-fructose 6-phosphate + NADH + H(+)</text>
        <dbReference type="Rhea" id="RHEA:19661"/>
        <dbReference type="ChEBI" id="CHEBI:15378"/>
        <dbReference type="ChEBI" id="CHEBI:57540"/>
        <dbReference type="ChEBI" id="CHEBI:57634"/>
        <dbReference type="ChEBI" id="CHEBI:57945"/>
        <dbReference type="ChEBI" id="CHEBI:61381"/>
        <dbReference type="EC" id="1.1.1.17"/>
    </reaction>
</comment>
<comment type="similarity">
    <text evidence="1">Belongs to the mannitol dehydrogenase family.</text>
</comment>